<protein>
    <recommendedName>
        <fullName evidence="18">Sodium channel protein type 11 subunit alpha</fullName>
    </recommendedName>
    <alternativeName>
        <fullName>Peripheral nerve sodium channel 5</fullName>
        <shortName>PN5</shortName>
    </alternativeName>
    <alternativeName>
        <fullName evidence="15">Sensory neuron sodium channel 2</fullName>
    </alternativeName>
    <alternativeName>
        <fullName>Sodium channel protein type XI subunit alpha</fullName>
    </alternativeName>
    <alternativeName>
        <fullName>Voltage-gated sodium channel subunit alpha Nav1.9</fullName>
    </alternativeName>
    <alternativeName>
        <fullName evidence="15">hNaN</fullName>
    </alternativeName>
</protein>
<proteinExistence type="evidence at protein level"/>
<feature type="chain" id="PRO_0000048510" description="Sodium channel protein type 11 subunit alpha">
    <location>
        <begin position="1"/>
        <end position="1791"/>
    </location>
</feature>
<feature type="topological domain" description="Cytoplasmic" evidence="18">
    <location>
        <begin position="1"/>
        <end position="126"/>
    </location>
</feature>
<feature type="transmembrane region" description="Helical; Name=S1 of repeat I" evidence="1">
    <location>
        <begin position="127"/>
        <end position="148"/>
    </location>
</feature>
<feature type="topological domain" description="Extracellular" evidence="18">
    <location>
        <begin position="149"/>
        <end position="156"/>
    </location>
</feature>
<feature type="transmembrane region" description="Helical; Name=S2 of repeat I" evidence="1">
    <location>
        <begin position="157"/>
        <end position="180"/>
    </location>
</feature>
<feature type="topological domain" description="Cytoplasmic" evidence="18">
    <location>
        <begin position="181"/>
        <end position="192"/>
    </location>
</feature>
<feature type="transmembrane region" description="Helical; Name=S3 of repeat I" evidence="1">
    <location>
        <begin position="193"/>
        <end position="212"/>
    </location>
</feature>
<feature type="topological domain" description="Extracellular" evidence="18">
    <location>
        <begin position="213"/>
        <end position="219"/>
    </location>
</feature>
<feature type="transmembrane region" description="Helical; Voltage-sensor; Name=S4 of repeat I" evidence="1">
    <location>
        <begin position="220"/>
        <end position="239"/>
    </location>
</feature>
<feature type="topological domain" description="Cytoplasmic" evidence="18">
    <location>
        <begin position="240"/>
        <end position="255"/>
    </location>
</feature>
<feature type="transmembrane region" description="Helical; Name=S5 of repeat I" evidence="1">
    <location>
        <begin position="256"/>
        <end position="269"/>
    </location>
</feature>
<feature type="topological domain" description="Extracellular" evidence="18">
    <location>
        <begin position="270"/>
        <end position="344"/>
    </location>
</feature>
<feature type="intramembrane region" description="Pore-forming" evidence="2">
    <location>
        <begin position="345"/>
        <end position="369"/>
    </location>
</feature>
<feature type="topological domain" description="Extracellular" evidence="18">
    <location>
        <begin position="370"/>
        <end position="376"/>
    </location>
</feature>
<feature type="transmembrane region" description="Helical; Name=S6 of repeat I" evidence="1">
    <location>
        <begin position="377"/>
        <end position="402"/>
    </location>
</feature>
<feature type="topological domain" description="Cytoplasmic" evidence="18">
    <location>
        <begin position="403"/>
        <end position="572"/>
    </location>
</feature>
<feature type="transmembrane region" description="Helical; Name=S1 of repeat II" evidence="1">
    <location>
        <begin position="573"/>
        <end position="596"/>
    </location>
</feature>
<feature type="topological domain" description="Extracellular" evidence="18">
    <location>
        <begin position="597"/>
        <end position="607"/>
    </location>
</feature>
<feature type="transmembrane region" description="Helical; Name=S2 of repeat II" evidence="1">
    <location>
        <begin position="608"/>
        <end position="631"/>
    </location>
</feature>
<feature type="topological domain" description="Cytoplasmic" evidence="18">
    <location>
        <begin position="632"/>
        <end position="639"/>
    </location>
</feature>
<feature type="transmembrane region" description="Helical; Name=S3 of repeat II" evidence="1">
    <location>
        <begin position="640"/>
        <end position="659"/>
    </location>
</feature>
<feature type="topological domain" description="Extracellular" evidence="18">
    <location>
        <begin position="660"/>
        <end position="667"/>
    </location>
</feature>
<feature type="transmembrane region" description="Helical; Voltage-sensor; Name=S4 of repeat II" evidence="1">
    <location>
        <begin position="668"/>
        <end position="687"/>
    </location>
</feature>
<feature type="topological domain" description="Cytoplasmic" evidence="18">
    <location>
        <begin position="688"/>
        <end position="702"/>
    </location>
</feature>
<feature type="transmembrane region" description="Helical; Name=S5 of repeat II" evidence="1">
    <location>
        <begin position="703"/>
        <end position="725"/>
    </location>
</feature>
<feature type="topological domain" description="Extracellular" evidence="18">
    <location>
        <begin position="726"/>
        <end position="753"/>
    </location>
</feature>
<feature type="intramembrane region" description="Pore-forming" evidence="2">
    <location>
        <begin position="754"/>
        <end position="774"/>
    </location>
</feature>
<feature type="topological domain" description="Extracellular" evidence="18">
    <location>
        <begin position="775"/>
        <end position="785"/>
    </location>
</feature>
<feature type="transmembrane region" description="Helical; Name=S6 of repeat II" evidence="1">
    <location>
        <begin position="786"/>
        <end position="811"/>
    </location>
</feature>
<feature type="topological domain" description="Cytoplasmic" evidence="18">
    <location>
        <begin position="812"/>
        <end position="1051"/>
    </location>
</feature>
<feature type="transmembrane region" description="Helical; Name=S1 of repeat III" evidence="1">
    <location>
        <begin position="1052"/>
        <end position="1074"/>
    </location>
</feature>
<feature type="topological domain" description="Extracellular" evidence="18">
    <location>
        <begin position="1075"/>
        <end position="1088"/>
    </location>
</feature>
<feature type="transmembrane region" description="Helical; Name=S2 of repeat III" evidence="1">
    <location>
        <begin position="1089"/>
        <end position="1114"/>
    </location>
</feature>
<feature type="topological domain" description="Cytoplasmic" evidence="18">
    <location>
        <begin position="1115"/>
        <end position="1120"/>
    </location>
</feature>
<feature type="transmembrane region" description="Helical; Name=S3 of repeat III" evidence="1">
    <location>
        <begin position="1121"/>
        <end position="1138"/>
    </location>
</feature>
<feature type="topological domain" description="Extracellular" evidence="18">
    <location>
        <position position="1139"/>
    </location>
</feature>
<feature type="transmembrane region" description="Helical; Voltage-sensor; Name=S4 of repeat III" evidence="1">
    <location>
        <begin position="1140"/>
        <end position="1161"/>
    </location>
</feature>
<feature type="topological domain" description="Cytoplasmic" evidence="18">
    <location>
        <begin position="1162"/>
        <end position="1180"/>
    </location>
</feature>
<feature type="transmembrane region" description="Helical; Name=S5 of repeat III" evidence="1">
    <location>
        <begin position="1181"/>
        <end position="1202"/>
    </location>
</feature>
<feature type="topological domain" description="Extracellular" evidence="18">
    <location>
        <begin position="1203"/>
        <end position="1243"/>
    </location>
</feature>
<feature type="intramembrane region" description="Pore-forming" evidence="2">
    <location>
        <begin position="1244"/>
        <end position="1265"/>
    </location>
</feature>
<feature type="topological domain" description="Extracellular" evidence="18">
    <location>
        <begin position="1266"/>
        <end position="1281"/>
    </location>
</feature>
<feature type="transmembrane region" description="Helical; Name=S6 of repeat III" evidence="1">
    <location>
        <begin position="1282"/>
        <end position="1308"/>
    </location>
</feature>
<feature type="topological domain" description="Cytoplasmic" evidence="18">
    <location>
        <begin position="1309"/>
        <end position="1361"/>
    </location>
</feature>
<feature type="transmembrane region" description="Helical; Name=S1 of repeat IV" evidence="1">
    <location>
        <begin position="1362"/>
        <end position="1385"/>
    </location>
</feature>
<feature type="topological domain" description="Extracellular" evidence="18">
    <location>
        <begin position="1386"/>
        <end position="1396"/>
    </location>
</feature>
<feature type="transmembrane region" description="Helical; Name=S2 of repeat IV" evidence="1">
    <location>
        <begin position="1397"/>
        <end position="1420"/>
    </location>
</feature>
<feature type="topological domain" description="Cytoplasmic" evidence="18">
    <location>
        <begin position="1421"/>
        <end position="1426"/>
    </location>
</feature>
<feature type="transmembrane region" description="Helical; Name=S3 of repeat IV" evidence="1">
    <location>
        <begin position="1427"/>
        <end position="1450"/>
    </location>
</feature>
<feature type="topological domain" description="Extracellular" evidence="18">
    <location>
        <begin position="1451"/>
        <end position="1461"/>
    </location>
</feature>
<feature type="transmembrane region" description="Helical; Voltage-sensor; Name=S4 of repeat IV" evidence="1">
    <location>
        <begin position="1462"/>
        <end position="1484"/>
    </location>
</feature>
<feature type="topological domain" description="Cytoplasmic" evidence="18">
    <location>
        <begin position="1485"/>
        <end position="1499"/>
    </location>
</feature>
<feature type="transmembrane region" description="Helical; Name=S5 of repeat IV" evidence="1">
    <location>
        <begin position="1500"/>
        <end position="1522"/>
    </location>
</feature>
<feature type="topological domain" description="Extracellular" evidence="18">
    <location>
        <begin position="1523"/>
        <end position="1536"/>
    </location>
</feature>
<feature type="intramembrane region" description="Pore-forming" evidence="2">
    <location>
        <begin position="1537"/>
        <end position="1559"/>
    </location>
</feature>
<feature type="topological domain" description="Extracellular" evidence="18">
    <location>
        <begin position="1560"/>
        <end position="1579"/>
    </location>
</feature>
<feature type="transmembrane region" description="Helical; Name=S6 of repeat IV" evidence="1">
    <location>
        <begin position="1580"/>
        <end position="1604"/>
    </location>
</feature>
<feature type="topological domain" description="Cytoplasmic" evidence="18">
    <location>
        <begin position="1605"/>
        <end position="1791"/>
    </location>
</feature>
<feature type="repeat" description="I" evidence="18">
    <location>
        <begin position="115"/>
        <end position="408"/>
    </location>
</feature>
<feature type="repeat" description="II" evidence="18">
    <location>
        <begin position="559"/>
        <end position="833"/>
    </location>
</feature>
<feature type="repeat" description="III" evidence="18">
    <location>
        <begin position="1044"/>
        <end position="1339"/>
    </location>
</feature>
<feature type="repeat" description="IV" evidence="18">
    <location>
        <begin position="1348"/>
        <end position="1639"/>
    </location>
</feature>
<feature type="glycosylation site" description="N-linked (GlcNAc...) asparagine" evidence="4">
    <location>
        <position position="290"/>
    </location>
</feature>
<feature type="glycosylation site" description="N-linked (GlcNAc...) asparagine" evidence="4">
    <location>
        <position position="338"/>
    </location>
</feature>
<feature type="glycosylation site" description="N-linked (GlcNAc...) asparagine" evidence="4">
    <location>
        <position position="781"/>
    </location>
</feature>
<feature type="glycosylation site" description="N-linked (GlcNAc...) asparagine" evidence="4">
    <location>
        <position position="1209"/>
    </location>
</feature>
<feature type="glycosylation site" description="N-linked (GlcNAc...) asparagine" evidence="4">
    <location>
        <position position="1216"/>
    </location>
</feature>
<feature type="glycosylation site" description="N-linked (GlcNAc...) asparagine" evidence="4">
    <location>
        <position position="1222"/>
    </location>
</feature>
<feature type="glycosylation site" description="N-linked (GlcNAc...) asparagine" evidence="4">
    <location>
        <position position="1230"/>
    </location>
</feature>
<feature type="glycosylation site" description="N-linked (GlcNAc...) asparagine" evidence="4">
    <location>
        <position position="1568"/>
    </location>
</feature>
<feature type="disulfide bond" evidence="2">
    <location>
        <begin position="283"/>
        <end position="322"/>
    </location>
</feature>
<feature type="disulfide bond" evidence="2">
    <location>
        <begin position="776"/>
        <end position="787"/>
    </location>
</feature>
<feature type="splice variant" id="VSP_012259" description="In isoform 3." evidence="17">
    <location>
        <begin position="946"/>
        <end position="983"/>
    </location>
</feature>
<feature type="splice variant" id="VSP_012260" description="In isoform 2." evidence="16">
    <original>T</original>
    <variation>K</variation>
    <location>
        <position position="1444"/>
    </location>
</feature>
<feature type="splice variant" id="VSP_012261" description="In isoform 2." evidence="16">
    <location>
        <begin position="1445"/>
        <end position="1791"/>
    </location>
</feature>
<feature type="sequence variant" id="VAR_076679" description="In FEPS3; dbSNP:rs1230622899." evidence="14">
    <original>R</original>
    <variation>H</variation>
    <location>
        <position position="222"/>
    </location>
</feature>
<feature type="sequence variant" id="VAR_076680" description="In FEPS3." evidence="14">
    <original>R</original>
    <variation>S</variation>
    <location>
        <position position="222"/>
    </location>
</feature>
<feature type="sequence variant" id="VAR_070919" description="In FEPS3; dbSNP:rs138607170." evidence="10">
    <original>R</original>
    <variation>C</variation>
    <location>
        <position position="225"/>
    </location>
</feature>
<feature type="sequence variant" id="VAR_076681" description="In dbSNP:rs751477540." evidence="14">
    <original>P</original>
    <variation>L</variation>
    <location>
        <position position="308"/>
    </location>
</feature>
<feature type="sequence variant" id="VAR_076682" description="In FEPS3; increased voltage-gated sodium channel activity; causes hyperexcitability of dorsal root ganglion neurons; depolarizes resting membrane potential; enhances spontaneous firing; hyperpolarizes channel activation; slows deactivation; decreases rates of current decay; does not change slow-inactivation; dbSNP:rs606231280." evidence="11">
    <original>I</original>
    <variation>T</variation>
    <location>
        <position position="381"/>
    </location>
</feature>
<feature type="sequence variant" id="VAR_076683" description="In dbSNP:rs150269814." evidence="11">
    <original>K</original>
    <variation>N</variation>
    <location>
        <position position="419"/>
    </location>
</feature>
<feature type="sequence variant" id="VAR_030002" description="In dbSNP:rs13059805.">
    <original>G</original>
    <variation>E</variation>
    <location>
        <position position="481"/>
    </location>
</feature>
<feature type="sequence variant" id="VAR_076684" description="In dbSNP:rs141228634." evidence="11">
    <original>A</original>
    <variation>T</variation>
    <location>
        <position position="582"/>
    </location>
</feature>
<feature type="sequence variant" id="VAR_076685" evidence="11">
    <original>A</original>
    <variation>D</variation>
    <location>
        <position position="681"/>
    </location>
</feature>
<feature type="sequence variant" id="VAR_076686" description="In FEPS3; causes hyperexcitability of dorsal root ganglion neurons; hyperpolarizes channel activation; slows deactivation; depolarizes steady-state fast-inactivation; dbSNP:rs145734191." evidence="12">
    <original>G</original>
    <variation>R</variation>
    <location>
        <position position="699"/>
    </location>
</feature>
<feature type="sequence variant" id="VAR_030003" description="In dbSNP:rs4302324.">
    <original>M</original>
    <variation>R</variation>
    <location>
        <position position="777"/>
    </location>
</feature>
<feature type="sequence variant" id="VAR_070920" description="In FEPS3; dbSNP:rs483352921." evidence="10">
    <original>A</original>
    <variation>G</variation>
    <location>
        <position position="808"/>
    </location>
</feature>
<feature type="sequence variant" id="VAR_070921" description="In HSAN7; increased voltage-gated sodium channel activity; results in excessive channel activity at resting voltages; causes sustained depolarization of nociceptors and impaired generation of action potentials; causes aberrant synaptic transmission; causes transient hyperexcitability of dorsal root ganglion neurons; dbSNP:rs483352920." evidence="9 13">
    <original>L</original>
    <variation>P</variation>
    <location>
        <position position="811"/>
    </location>
</feature>
<feature type="sequence variant" id="VAR_076687" description="In dbSNP:rs1373209779." evidence="11">
    <original>A</original>
    <variation>P</variation>
    <location>
        <position position="842"/>
    </location>
</feature>
<feature type="sequence variant" id="VAR_048697" description="In dbSNP:rs33985936." evidence="14">
    <original>V</original>
    <variation>I</variation>
    <location>
        <position position="909"/>
    </location>
</feature>
<feature type="sequence variant" id="VAR_076688" description="In FEPS3; increased voltage-gated sodium channel activity; slows deactivation; depolarizes resting membrane potential; enhances spontaneous firing; decreases rates of current decay; does not change fast-inactivation; does not change slow-inactivation; dbSNP:rs141686175." evidence="11">
    <original>L</original>
    <variation>P</variation>
    <location>
        <position position="1158"/>
    </location>
</feature>
<feature type="sequence variant" id="VAR_075250" description="In HSAN7; cold-aggravated peripheral pain seen in some patients; enhances the channel activity by shifting the voltage dependence of channel opening to hyperpolarized potentials thereby giving rise to hyperexcitability of nociceptors; causes hyperexcitability and reduced cold-sensitivity of dorsal root ganglion neurons." evidence="13">
    <original>V</original>
    <variation>A</variation>
    <location>
        <position position="1184"/>
    </location>
</feature>
<feature type="sequence variant" id="VAR_030004" description="In dbSNP:rs12638601.">
    <original>Y</original>
    <variation>H</variation>
    <location>
        <position position="1198"/>
    </location>
</feature>
<feature type="sequence variant" id="VAR_076689" description="In dbSNP:rs72869687." evidence="14">
    <original>T</original>
    <variation>I</variation>
    <location>
        <position position="1609"/>
    </location>
</feature>
<feature type="sequence variant" id="VAR_076690" description="In dbSNP:rs201107889." evidence="11">
    <original>F</original>
    <variation>L</variation>
    <location>
        <position position="1689"/>
    </location>
</feature>
<feature type="sequence conflict" description="In Ref. 3; CAD10507." evidence="18" ref="3">
    <original>D</original>
    <variation>G</variation>
    <location>
        <position position="576"/>
    </location>
</feature>
<feature type="sequence conflict" description="In Ref. 2; AAF24976/AAF24980." evidence="18" ref="2">
    <original>S</original>
    <variation>N</variation>
    <location>
        <position position="703"/>
    </location>
</feature>
<feature type="sequence conflict" description="In Ref. 3; CAD10507." evidence="18" ref="3">
    <original>R</original>
    <variation>G</variation>
    <location>
        <position position="847"/>
    </location>
</feature>
<feature type="sequence conflict" description="In Ref. 5; AAT95434." evidence="18" ref="5">
    <original>I</original>
    <variation>T</variation>
    <location>
        <position position="1086"/>
    </location>
</feature>
<evidence type="ECO:0000250" key="1"/>
<evidence type="ECO:0000250" key="2">
    <source>
        <dbReference type="UniProtKB" id="D0E0C2"/>
    </source>
</evidence>
<evidence type="ECO:0000250" key="3">
    <source>
        <dbReference type="UniProtKB" id="Q62968"/>
    </source>
</evidence>
<evidence type="ECO:0000255" key="4"/>
<evidence type="ECO:0000269" key="5">
    <source>
    </source>
</evidence>
<evidence type="ECO:0000269" key="6">
    <source>
    </source>
</evidence>
<evidence type="ECO:0000269" key="7">
    <source>
    </source>
</evidence>
<evidence type="ECO:0000269" key="8">
    <source>
    </source>
</evidence>
<evidence type="ECO:0000269" key="9">
    <source>
    </source>
</evidence>
<evidence type="ECO:0000269" key="10">
    <source>
    </source>
</evidence>
<evidence type="ECO:0000269" key="11">
    <source>
    </source>
</evidence>
<evidence type="ECO:0000269" key="12">
    <source>
    </source>
</evidence>
<evidence type="ECO:0000269" key="13">
    <source>
    </source>
</evidence>
<evidence type="ECO:0000269" key="14">
    <source>
    </source>
</evidence>
<evidence type="ECO:0000303" key="15">
    <source>
    </source>
</evidence>
<evidence type="ECO:0000303" key="16">
    <source>
    </source>
</evidence>
<evidence type="ECO:0000303" key="17">
    <source>
    </source>
</evidence>
<evidence type="ECO:0000305" key="18"/>
<evidence type="ECO:0000305" key="19">
    <source>
    </source>
</evidence>
<evidence type="ECO:0000312" key="20">
    <source>
        <dbReference type="HGNC" id="HGNC:10583"/>
    </source>
</evidence>
<gene>
    <name evidence="20" type="primary">SCN11A</name>
    <name evidence="16" type="synonym">SCN12A</name>
    <name evidence="15" type="synonym">SNS2</name>
</gene>
<keyword id="KW-0025">Alternative splicing</keyword>
<keyword id="KW-1003">Cell membrane</keyword>
<keyword id="KW-0225">Disease variant</keyword>
<keyword id="KW-1015">Disulfide bond</keyword>
<keyword id="KW-0325">Glycoprotein</keyword>
<keyword id="KW-0407">Ion channel</keyword>
<keyword id="KW-0406">Ion transport</keyword>
<keyword id="KW-0472">Membrane</keyword>
<keyword id="KW-0523">Neurodegeneration</keyword>
<keyword id="KW-0622">Neuropathy</keyword>
<keyword id="KW-0597">Phosphoprotein</keyword>
<keyword id="KW-1185">Reference proteome</keyword>
<keyword id="KW-0677">Repeat</keyword>
<keyword id="KW-0915">Sodium</keyword>
<keyword id="KW-0894">Sodium channel</keyword>
<keyword id="KW-0739">Sodium transport</keyword>
<keyword id="KW-0812">Transmembrane</keyword>
<keyword id="KW-1133">Transmembrane helix</keyword>
<keyword id="KW-0813">Transport</keyword>
<keyword id="KW-0851">Voltage-gated channel</keyword>
<organism>
    <name type="scientific">Homo sapiens</name>
    <name type="common">Human</name>
    <dbReference type="NCBI Taxonomy" id="9606"/>
    <lineage>
        <taxon>Eukaryota</taxon>
        <taxon>Metazoa</taxon>
        <taxon>Chordata</taxon>
        <taxon>Craniata</taxon>
        <taxon>Vertebrata</taxon>
        <taxon>Euteleostomi</taxon>
        <taxon>Mammalia</taxon>
        <taxon>Eutheria</taxon>
        <taxon>Euarchontoglires</taxon>
        <taxon>Primates</taxon>
        <taxon>Haplorrhini</taxon>
        <taxon>Catarrhini</taxon>
        <taxon>Hominidae</taxon>
        <taxon>Homo</taxon>
    </lineage>
</organism>
<reference key="1">
    <citation type="journal article" date="1999" name="FEBS Lett.">
        <title>Two tetrodotoxin-resistant sodium channels in human dorsal root ganglion neurons.</title>
        <authorList>
            <person name="Dib-Hajj S.D."/>
            <person name="Tyrrell L."/>
            <person name="Cummins T.R."/>
            <person name="Black J.A."/>
            <person name="Wood P.M."/>
            <person name="Waxman S.G."/>
        </authorList>
    </citation>
    <scope>NUCLEOTIDE SEQUENCE [MRNA] (ISOFORM 1)</scope>
    <scope>FUNCTION IN VOLTAGE-EVOKED DEPOLARIZATION</scope>
    <scope>TRANSPORTER ACTIVITY</scope>
    <scope>ACTIVITY REGULATION</scope>
    <source>
        <tissue>Spinal ganglion</tissue>
    </source>
</reference>
<reference key="2">
    <citation type="journal article" date="2000" name="Biochem. Biophys. Res. Commun.">
        <title>Identification of a novel human voltage-gated sodium channel alpha subunit gene, SCN12A.</title>
        <authorList>
            <person name="Jeong S.-Y."/>
            <person name="Goto J."/>
            <person name="Hashida H."/>
            <person name="Suzuki T."/>
            <person name="Ogata K."/>
            <person name="Masuda M."/>
            <person name="Hirai M."/>
            <person name="Isahara K."/>
            <person name="Uchiyama Y."/>
            <person name="Kanazawa I."/>
        </authorList>
    </citation>
    <scope>NUCLEOTIDE SEQUENCE [MRNA] (ISOFORMS 1 AND 2)</scope>
    <scope>TISSUE SPECIFICITY</scope>
    <source>
        <tissue>Brain</tissue>
    </source>
</reference>
<reference key="3">
    <citation type="journal article" date="2002" name="Nature">
        <title>Neurotrophin-evoked depolarization requires the sodium channel Nav1.9.</title>
        <authorList>
            <person name="Blum R."/>
            <person name="Kafitz K.W."/>
            <person name="Konnerth A."/>
        </authorList>
    </citation>
    <scope>NUCLEOTIDE SEQUENCE [MRNA] (ISOFORM 1)</scope>
    <scope>FUNCTION IN NEUROTROPHIN-EVOKED DEPOLARIZATION</scope>
    <scope>TRANSPORTER ACTIVITY</scope>
    <scope>SUBCELLULAR LOCATION</scope>
    <source>
        <tissue>Neuroblastoma</tissue>
    </source>
</reference>
<reference key="4">
    <citation type="journal article" date="2006" name="Nature">
        <title>The DNA sequence, annotation and analysis of human chromosome 3.</title>
        <authorList>
            <person name="Muzny D.M."/>
            <person name="Scherer S.E."/>
            <person name="Kaul R."/>
            <person name="Wang J."/>
            <person name="Yu J."/>
            <person name="Sudbrak R."/>
            <person name="Buhay C.J."/>
            <person name="Chen R."/>
            <person name="Cree A."/>
            <person name="Ding Y."/>
            <person name="Dugan-Rocha S."/>
            <person name="Gill R."/>
            <person name="Gunaratne P."/>
            <person name="Harris R.A."/>
            <person name="Hawes A.C."/>
            <person name="Hernandez J."/>
            <person name="Hodgson A.V."/>
            <person name="Hume J."/>
            <person name="Jackson A."/>
            <person name="Khan Z.M."/>
            <person name="Kovar-Smith C."/>
            <person name="Lewis L.R."/>
            <person name="Lozado R.J."/>
            <person name="Metzker M.L."/>
            <person name="Milosavljevic A."/>
            <person name="Miner G.R."/>
            <person name="Morgan M.B."/>
            <person name="Nazareth L.V."/>
            <person name="Scott G."/>
            <person name="Sodergren E."/>
            <person name="Song X.-Z."/>
            <person name="Steffen D."/>
            <person name="Wei S."/>
            <person name="Wheeler D.A."/>
            <person name="Wright M.W."/>
            <person name="Worley K.C."/>
            <person name="Yuan Y."/>
            <person name="Zhang Z."/>
            <person name="Adams C.Q."/>
            <person name="Ansari-Lari M.A."/>
            <person name="Ayele M."/>
            <person name="Brown M.J."/>
            <person name="Chen G."/>
            <person name="Chen Z."/>
            <person name="Clendenning J."/>
            <person name="Clerc-Blankenburg K.P."/>
            <person name="Chen R."/>
            <person name="Chen Z."/>
            <person name="Davis C."/>
            <person name="Delgado O."/>
            <person name="Dinh H.H."/>
            <person name="Dong W."/>
            <person name="Draper H."/>
            <person name="Ernst S."/>
            <person name="Fu G."/>
            <person name="Gonzalez-Garay M.L."/>
            <person name="Garcia D.K."/>
            <person name="Gillett W."/>
            <person name="Gu J."/>
            <person name="Hao B."/>
            <person name="Haugen E."/>
            <person name="Havlak P."/>
            <person name="He X."/>
            <person name="Hennig S."/>
            <person name="Hu S."/>
            <person name="Huang W."/>
            <person name="Jackson L.R."/>
            <person name="Jacob L.S."/>
            <person name="Kelly S.H."/>
            <person name="Kube M."/>
            <person name="Levy R."/>
            <person name="Li Z."/>
            <person name="Liu B."/>
            <person name="Liu J."/>
            <person name="Liu W."/>
            <person name="Lu J."/>
            <person name="Maheshwari M."/>
            <person name="Nguyen B.-V."/>
            <person name="Okwuonu G.O."/>
            <person name="Palmeiri A."/>
            <person name="Pasternak S."/>
            <person name="Perez L.M."/>
            <person name="Phelps K.A."/>
            <person name="Plopper F.J."/>
            <person name="Qiang B."/>
            <person name="Raymond C."/>
            <person name="Rodriguez R."/>
            <person name="Saenphimmachak C."/>
            <person name="Santibanez J."/>
            <person name="Shen H."/>
            <person name="Shen Y."/>
            <person name="Subramanian S."/>
            <person name="Tabor P.E."/>
            <person name="Verduzco D."/>
            <person name="Waldron L."/>
            <person name="Wang J."/>
            <person name="Wang J."/>
            <person name="Wang Q."/>
            <person name="Williams G.A."/>
            <person name="Wong G.K.-S."/>
            <person name="Yao Z."/>
            <person name="Zhang J."/>
            <person name="Zhang X."/>
            <person name="Zhao G."/>
            <person name="Zhou J."/>
            <person name="Zhou Y."/>
            <person name="Nelson D."/>
            <person name="Lehrach H."/>
            <person name="Reinhardt R."/>
            <person name="Naylor S.L."/>
            <person name="Yang H."/>
            <person name="Olson M."/>
            <person name="Weinstock G."/>
            <person name="Gibbs R.A."/>
        </authorList>
    </citation>
    <scope>NUCLEOTIDE SEQUENCE [LARGE SCALE GENOMIC DNA]</scope>
</reference>
<reference key="5">
    <citation type="journal article" date="2004" name="J. Biol. Chem.">
        <title>Expression of alternatively spliced sodium channel alpha-subunit genes: unique splicing patterns are observed in dorsal root ganglia.</title>
        <authorList>
            <person name="Raymond C.K."/>
            <person name="Castle J.C."/>
            <person name="Garrett-Engele P.W."/>
            <person name="Armour C.D."/>
            <person name="Kan Z.G."/>
            <person name="Tsinoremas N.T."/>
            <person name="Johnson J.M."/>
        </authorList>
    </citation>
    <scope>NUCLEOTIDE SEQUENCE [MRNA] OF 924-1114 (ISOFORM 3)</scope>
    <scope>TISSUE SPECIFICITY</scope>
    <source>
        <tissue>Spinal ganglion</tissue>
    </source>
</reference>
<reference key="6">
    <citation type="journal article" date="2013" name="Am. J. Hum. Genet.">
        <title>Gain-of-function mutations in SCN11A cause familial episodic pain.</title>
        <authorList>
            <person name="Zhang X.Y."/>
            <person name="Wen J."/>
            <person name="Yang W."/>
            <person name="Wang C."/>
            <person name="Gao L."/>
            <person name="Zheng L.H."/>
            <person name="Wang T."/>
            <person name="Ran K."/>
            <person name="Li Y."/>
            <person name="Li X."/>
            <person name="Xu M."/>
            <person name="Luo J."/>
            <person name="Feng S."/>
            <person name="Ma X."/>
            <person name="Ma H."/>
            <person name="Chai Z."/>
            <person name="Zhou Z."/>
            <person name="Yao J."/>
            <person name="Zhang X."/>
            <person name="Liu J.Y."/>
        </authorList>
    </citation>
    <scope>VARIANTS FEPS3 CYS-225 AND GLY-808</scope>
</reference>
<reference key="7">
    <citation type="journal article" date="2013" name="Nat. Genet.">
        <title>A de novo gain-of-function mutation in SCN11A causes loss of pain perception.</title>
        <authorList>
            <person name="Leipold E."/>
            <person name="Liebmann L."/>
            <person name="Korenke G.C."/>
            <person name="Heinrich T."/>
            <person name="Giesselmann S."/>
            <person name="Baets J."/>
            <person name="Ebbinghaus M."/>
            <person name="Goral R.O."/>
            <person name="Stodberg T."/>
            <person name="Hennings J.C."/>
            <person name="Bergmann M."/>
            <person name="Altmuller J."/>
            <person name="Thiele H."/>
            <person name="Wetzel A."/>
            <person name="Nurnberg P."/>
            <person name="Timmerman V."/>
            <person name="De Jonghe P."/>
            <person name="Blum R."/>
            <person name="Schaible H.G."/>
            <person name="Weis J."/>
            <person name="Heinemann S.H."/>
            <person name="Hubner C.A."/>
            <person name="Kurth I."/>
        </authorList>
    </citation>
    <scope>VARIANT HSAN7 PRO-811</scope>
    <scope>CHARACTERIZATION OF VARIANT HSAN7 PRO-811</scope>
    <scope>FUNCTION</scope>
    <scope>TRANSPORTER ACTIVITY</scope>
    <scope>SUBCELLULAR LOCATION</scope>
</reference>
<reference key="8">
    <citation type="journal article" date="2014" name="Brain">
        <title>Gain-of-function mutations in sodium channel Na(v)1.9 in painful neuropathy.</title>
        <authorList>
            <consortium name="PROPANE Study Group"/>
            <person name="Huang J."/>
            <person name="Han C."/>
            <person name="Estacion M."/>
            <person name="Vasylyev D."/>
            <person name="Hoeijmakers J.G."/>
            <person name="Gerrits M.M."/>
            <person name="Tyrrell L."/>
            <person name="Lauria G."/>
            <person name="Faber C.G."/>
            <person name="Dib-Hajj S.D."/>
            <person name="Merkies I.S."/>
            <person name="Waxman S.G."/>
        </authorList>
    </citation>
    <scope>VARIANTS FEPS3 THR-381 AND PRO-1158</scope>
    <scope>VARIANTS ASN-419; THR-582; ASP-681; PRO-842 AND LEU-1689</scope>
    <scope>CHARACTERIZATION OF VARIANTS FEPS3 THR-381 AND PRO-1158</scope>
    <scope>FUNCTION</scope>
    <scope>TRANSPORTER ACTIVITY</scope>
</reference>
<reference key="9">
    <citation type="journal article" date="2015" name="Nat. Commun.">
        <title>Cold-aggravated pain in humans caused by a hyperactive NaV1.9 channel mutant.</title>
        <authorList>
            <person name="Leipold E."/>
            <person name="Hanson-Kahn A."/>
            <person name="Frick M."/>
            <person name="Gong P."/>
            <person name="Bernstein J.A."/>
            <person name="Voigt M."/>
            <person name="Katona I."/>
            <person name="Oliver Goral R."/>
            <person name="Altmueller J."/>
            <person name="Nuernberg P."/>
            <person name="Weis J."/>
            <person name="Huebner C.A."/>
            <person name="Heinemann S.H."/>
            <person name="Kurth I."/>
        </authorList>
    </citation>
    <scope>VARIANT HSAN7 ALA-1184</scope>
    <scope>CHARACTERIZATION OF VARIANTS HSAN7 PRO-811 AND ALA-1184</scope>
    <scope>FUNCTION</scope>
    <scope>TRANSPORTER ACTIVITY</scope>
</reference>
<reference key="10">
    <citation type="journal article" date="2015" name="NeuroMolecular Med.">
        <title>The domain II S4-S5 linker in Nav1.9: a missense mutation enhances activation, impairs fast inactivation, and produces human painful neuropathy.</title>
        <authorList>
            <person name="Han C."/>
            <person name="Yang Y."/>
            <person name="de Greef B.T."/>
            <person name="Hoeijmakers J.G."/>
            <person name="Gerrits M.M."/>
            <person name="Verhamme C."/>
            <person name="Qu J."/>
            <person name="Lauria G."/>
            <person name="Merkies I.S."/>
            <person name="Faber C.G."/>
            <person name="Dib-Hajj S.D."/>
            <person name="Waxman S.G."/>
        </authorList>
    </citation>
    <scope>VARIANT FEPS3 ARG-699</scope>
    <scope>CHARACTERIZATION OF VARIANT FEPS3 ARG-699</scope>
    <scope>FUNCTION</scope>
    <scope>TRANSPORTER ACTIVITY</scope>
</reference>
<reference key="11">
    <citation type="journal article" date="2016" name="PLoS ONE">
        <title>Infantile pain episodes associated with novel Nav1.9 mutations in familial episodic pain syndrome in japanese families.</title>
        <authorList>
            <person name="Okuda H."/>
            <person name="Noguchi A."/>
            <person name="Kobayashi H."/>
            <person name="Kondo D."/>
            <person name="Harada K.H."/>
            <person name="Youssefian S."/>
            <person name="Shioi H."/>
            <person name="Kabata R."/>
            <person name="Domon Y."/>
            <person name="Kubota K."/>
            <person name="Kitano Y."/>
            <person name="Takayama Y."/>
            <person name="Hitomi T."/>
            <person name="Ohno K."/>
            <person name="Saito Y."/>
            <person name="Asano T."/>
            <person name="Tominaga M."/>
            <person name="Takahashi T."/>
            <person name="Koizumi A."/>
        </authorList>
    </citation>
    <scope>VARIANTS FEPS3 HIS-222 AND SER-222</scope>
    <scope>VARIANTS LEU-308; ILE-909 AND ILE-1609</scope>
</reference>
<comment type="function">
    <text evidence="5 7 9 11 12 13">Sodium channel mediating the voltage-dependent sodium ion permeability of excitable membranes. Assuming opened or closed conformations in response to the voltage difference across the membrane, the protein forms a sodium-selective channel through which sodium ions may pass in accordance with their electrochemical gradient (PubMed:10580103, PubMed:12384689, PubMed:24036948, PubMed:24776970, PubMed:25791876, PubMed:26645915). Involved in membrane depolarization during action potential in nociceptors which function as key relay stations for the electrical transmission of pain signals from the periphery to the central nervous system (PubMed:24036948, PubMed:24776970, PubMed:25791876, PubMed:26645915). Also involved in rapid BDNF-evoked neuronal depolarization (PubMed:12384689).</text>
</comment>
<comment type="catalytic activity">
    <reaction evidence="5 7 9 11 12 13">
        <text>Na(+)(in) = Na(+)(out)</text>
        <dbReference type="Rhea" id="RHEA:34963"/>
        <dbReference type="ChEBI" id="CHEBI:29101"/>
    </reaction>
</comment>
<comment type="activity regulation">
    <text evidence="19">Activity is not sensitive to inhibition by tetrodotoxin.</text>
</comment>
<comment type="subunit">
    <text evidence="3">The voltage-resistant sodium channel consists of an ion conducting pore forming alpha-subunit regulated by one or more auxiliary subunits SCN1B, SCN2B and SCN3B.</text>
</comment>
<comment type="subcellular location">
    <subcellularLocation>
        <location evidence="7 9">Cell membrane</location>
        <topology evidence="4">Multi-pass membrane protein</topology>
    </subcellularLocation>
</comment>
<comment type="alternative products">
    <event type="alternative splicing"/>
    <isoform>
        <id>Q9UI33-1</id>
        <name>1</name>
        <sequence type="displayed"/>
    </isoform>
    <isoform>
        <id>Q9UI33-2</id>
        <name>2</name>
        <name>Scn12a-s</name>
        <sequence type="described" ref="VSP_012260 VSP_012261"/>
    </isoform>
    <isoform>
        <id>Q9UI33-3</id>
        <name>3</name>
        <sequence type="described" ref="VSP_012259"/>
    </isoform>
</comment>
<comment type="tissue specificity">
    <text evidence="6 8">Expressed in the dorsal root ganglia and trigeminal ganglia, olfactory bulb, hippocampus, cerebellar cortex, spinal cord, spleen, small intestine and placenta.</text>
</comment>
<comment type="domain">
    <text evidence="18">The sequence contains 4 internal repeats, each with 5 hydrophobic segments (S1, S2, S3, S5, S6) and one positively charged segment (S4). Segments S4 are probably the voltage-sensors and are characterized by a series of positively charged amino acids at every third position.</text>
</comment>
<comment type="disease" evidence="9 13">
    <disease id="DI-03988">
        <name>Neuropathy, hereditary sensory and autonomic, 7</name>
        <acronym>HSAN7</acronym>
        <description>A form of hereditary sensory and autonomic neuropathy, a genetically and clinically heterogeneous group of disorders characterized by degeneration of dorsal root and autonomic ganglion cells, and by sensory and/or autonomic abnormalities. HSAN7 is characterized by congenital inability to experience pain resulting in self-mutilations, slow-healing wounds, and multiple painless fractures. mild muscle weakness, delayed motor development, slightly reduced motor and sensory nerve conduction velocities, hyperhidrosis and gastrointestinal dysfunction.</description>
        <dbReference type="MIM" id="615548"/>
    </disease>
    <text>The disease is caused by variants affecting the gene represented in this entry.</text>
</comment>
<comment type="disease" evidence="10 11 12 14">
    <disease id="DI-03978">
        <name>Episodic pain syndrome, familial, 3</name>
        <acronym>FEPS3</acronym>
        <description>An autosomal dominant neurologic disorder characterized by paroxysmal pain mainly affecting the distal lower extremities and occasionally the upper body, especially the joints of fingers and arms. The pain is exacerbated with fatigue.</description>
        <dbReference type="MIM" id="615552"/>
    </disease>
    <text>The disease is caused by variants affecting the gene represented in this entry.</text>
</comment>
<comment type="similarity">
    <text evidence="18">Belongs to the sodium channel (TC 1.A.1.10) family. Nav1.9/SCN11A subfamily.</text>
</comment>
<name>SCNBA_HUMAN</name>
<dbReference type="EMBL" id="AF188679">
    <property type="protein sequence ID" value="AAF17480.1"/>
    <property type="molecule type" value="mRNA"/>
</dbReference>
<dbReference type="EMBL" id="AF109737">
    <property type="protein sequence ID" value="AAF24976.1"/>
    <property type="molecule type" value="mRNA"/>
</dbReference>
<dbReference type="EMBL" id="AF150882">
    <property type="protein sequence ID" value="AAF24980.1"/>
    <property type="molecule type" value="mRNA"/>
</dbReference>
<dbReference type="EMBL" id="AJ417790">
    <property type="protein sequence ID" value="CAD10507.1"/>
    <property type="molecule type" value="mRNA"/>
</dbReference>
<dbReference type="EMBL" id="AC116038">
    <property type="status" value="NOT_ANNOTATED_CDS"/>
    <property type="molecule type" value="Genomic_DNA"/>
</dbReference>
<dbReference type="EMBL" id="AY686224">
    <property type="protein sequence ID" value="AAT95434.1"/>
    <property type="molecule type" value="mRNA"/>
</dbReference>
<dbReference type="CCDS" id="CCDS33737.1">
    <molecule id="Q9UI33-1"/>
</dbReference>
<dbReference type="RefSeq" id="NP_001274152.1">
    <property type="nucleotide sequence ID" value="NM_001287223.1"/>
</dbReference>
<dbReference type="RefSeq" id="NP_001336182.1">
    <molecule id="Q9UI33-1"/>
    <property type="nucleotide sequence ID" value="NM_001349253.2"/>
</dbReference>
<dbReference type="RefSeq" id="NP_054858.2">
    <molecule id="Q9UI33-1"/>
    <property type="nucleotide sequence ID" value="NM_014139.3"/>
</dbReference>
<dbReference type="RefSeq" id="XP_016861138.1">
    <property type="nucleotide sequence ID" value="XM_017005649.1"/>
</dbReference>
<dbReference type="RefSeq" id="XP_016861139.1">
    <molecule id="Q9UI33-1"/>
    <property type="nucleotide sequence ID" value="XM_017005650.2"/>
</dbReference>
<dbReference type="RefSeq" id="XP_054201081.1">
    <molecule id="Q9UI33-1"/>
    <property type="nucleotide sequence ID" value="XM_054345106.1"/>
</dbReference>
<dbReference type="SMR" id="Q9UI33"/>
<dbReference type="BioGRID" id="116436">
    <property type="interactions" value="3"/>
</dbReference>
<dbReference type="ComplexPortal" id="CPX-8685">
    <property type="entry name" value="Nav1.9 voltage-gated sodium channel complex, SCN1B-SCN2B variant"/>
</dbReference>
<dbReference type="ComplexPortal" id="CPX-8686">
    <property type="entry name" value="Nav1.9 voltage-gated sodium channel complex, SCN1B-SCN4B variant"/>
</dbReference>
<dbReference type="ComplexPortal" id="CPX-8687">
    <property type="entry name" value="Nav1.9 voltage-gated sodium channel complex, SCN3B-SCN4B variant"/>
</dbReference>
<dbReference type="ComplexPortal" id="CPX-8690">
    <property type="entry name" value="Nav1.9 voltage-gated sodium channel complex, SCN2B-SCN3B variant"/>
</dbReference>
<dbReference type="FunCoup" id="Q9UI33">
    <property type="interactions" value="20"/>
</dbReference>
<dbReference type="IntAct" id="Q9UI33">
    <property type="interactions" value="2"/>
</dbReference>
<dbReference type="STRING" id="9606.ENSP00000499569"/>
<dbReference type="BindingDB" id="Q9UI33"/>
<dbReference type="ChEMBL" id="CHEMBL5167"/>
<dbReference type="DrugBank" id="DB09088">
    <property type="generic name" value="Amylocaine"/>
</dbReference>
<dbReference type="DrugBank" id="DB09009">
    <property type="generic name" value="Articaine"/>
</dbReference>
<dbReference type="DrugBank" id="DB13746">
    <property type="generic name" value="Bioallethrin"/>
</dbReference>
<dbReference type="DrugBank" id="DB05541">
    <property type="generic name" value="Brivaracetam"/>
</dbReference>
<dbReference type="DrugBank" id="DB00564">
    <property type="generic name" value="Carbamazepine"/>
</dbReference>
<dbReference type="DrugBank" id="DB06119">
    <property type="generic name" value="Cenobamate"/>
</dbReference>
<dbReference type="DrugBank" id="DB01161">
    <property type="generic name" value="Chloroprocaine"/>
</dbReference>
<dbReference type="DrugBank" id="DB00907">
    <property type="generic name" value="Cocaine"/>
</dbReference>
<dbReference type="DrugBank" id="DB13269">
    <property type="generic name" value="Dichlorobenzyl alcohol"/>
</dbReference>
<dbReference type="DrugBank" id="DB14575">
    <property type="generic name" value="Eslicarbazepine"/>
</dbReference>
<dbReference type="DrugBank" id="DB13961">
    <property type="generic name" value="Fish oil"/>
</dbReference>
<dbReference type="DrugBank" id="DB06218">
    <property type="generic name" value="Lacosamide"/>
</dbReference>
<dbReference type="DrugBank" id="DB00555">
    <property type="generic name" value="Lamotrigine"/>
</dbReference>
<dbReference type="DrugBank" id="DB00281">
    <property type="generic name" value="Lidocaine"/>
</dbReference>
<dbReference type="DrugBank" id="DB12714">
    <property type="generic name" value="Nerispirdine"/>
</dbReference>
<dbReference type="DrugBank" id="DB00776">
    <property type="generic name" value="Oxcarbazepine"/>
</dbReference>
<dbReference type="DrugBank" id="DB11186">
    <property type="generic name" value="Pentoxyverine"/>
</dbReference>
<dbReference type="DrugBank" id="DB09345">
    <property type="generic name" value="Pramocaine"/>
</dbReference>
<dbReference type="DrugBank" id="DB01069">
    <property type="generic name" value="Promethazine"/>
</dbReference>
<dbReference type="DrugBank" id="DB09342">
    <property type="generic name" value="Propoxycaine"/>
</dbReference>
<dbReference type="DrugBank" id="DB00243">
    <property type="generic name" value="Ranolazine"/>
</dbReference>
<dbReference type="DrugBank" id="DB00740">
    <property type="generic name" value="Riluzole"/>
</dbReference>
<dbReference type="DrugBank" id="DB09085">
    <property type="generic name" value="Tetracaine"/>
</dbReference>
<dbReference type="DrugBank" id="DB06264">
    <property type="generic name" value="Tolperisone"/>
</dbReference>
<dbReference type="DrugBank" id="DB00273">
    <property type="generic name" value="Topiramate"/>
</dbReference>
<dbReference type="DrugBank" id="DB00313">
    <property type="generic name" value="Valproic acid"/>
</dbReference>
<dbReference type="DrugBank" id="DB00909">
    <property type="generic name" value="Zonisamide"/>
</dbReference>
<dbReference type="DrugCentral" id="Q9UI33"/>
<dbReference type="TCDB" id="1.A.1.10.9">
    <property type="family name" value="the voltage-gated ion channel (vic) superfamily"/>
</dbReference>
<dbReference type="GlyCosmos" id="Q9UI33">
    <property type="glycosylation" value="8 sites, No reported glycans"/>
</dbReference>
<dbReference type="GlyGen" id="Q9UI33">
    <property type="glycosylation" value="10 sites, 1 O-linked glycan (1 site)"/>
</dbReference>
<dbReference type="iPTMnet" id="Q9UI33"/>
<dbReference type="PhosphoSitePlus" id="Q9UI33"/>
<dbReference type="SwissPalm" id="Q9UI33"/>
<dbReference type="BioMuta" id="SCN11A"/>
<dbReference type="DMDM" id="124053649"/>
<dbReference type="jPOST" id="Q9UI33"/>
<dbReference type="MassIVE" id="Q9UI33"/>
<dbReference type="PaxDb" id="9606-ENSP00000307599"/>
<dbReference type="PeptideAtlas" id="Q9UI33"/>
<dbReference type="ProteomicsDB" id="84461">
    <molecule id="Q9UI33-1"/>
</dbReference>
<dbReference type="ProteomicsDB" id="84462">
    <molecule id="Q9UI33-2"/>
</dbReference>
<dbReference type="ProteomicsDB" id="84463">
    <molecule id="Q9UI33-3"/>
</dbReference>
<dbReference type="Antibodypedia" id="28814">
    <property type="antibodies" value="120 antibodies from 24 providers"/>
</dbReference>
<dbReference type="DNASU" id="11280"/>
<dbReference type="Ensembl" id="ENST00000302328.9">
    <molecule id="Q9UI33-1"/>
    <property type="protein sequence ID" value="ENSP00000307599.3"/>
    <property type="gene ID" value="ENSG00000168356.13"/>
</dbReference>
<dbReference type="Ensembl" id="ENST00000444237.2">
    <molecule id="Q9UI33-2"/>
    <property type="protein sequence ID" value="ENSP00000408028.2"/>
    <property type="gene ID" value="ENSG00000168356.13"/>
</dbReference>
<dbReference type="Ensembl" id="ENST00000456224.7">
    <molecule id="Q9UI33-3"/>
    <property type="protein sequence ID" value="ENSP00000416757.3"/>
    <property type="gene ID" value="ENSG00000168356.13"/>
</dbReference>
<dbReference type="Ensembl" id="ENST00000668754.1">
    <molecule id="Q9UI33-1"/>
    <property type="protein sequence ID" value="ENSP00000499569.1"/>
    <property type="gene ID" value="ENSG00000168356.13"/>
</dbReference>
<dbReference type="GeneID" id="11280"/>
<dbReference type="KEGG" id="hsa:11280"/>
<dbReference type="MANE-Select" id="ENST00000302328.9">
    <property type="protein sequence ID" value="ENSP00000307599.3"/>
    <property type="RefSeq nucleotide sequence ID" value="NM_001349253.2"/>
    <property type="RefSeq protein sequence ID" value="NP_001336182.1"/>
</dbReference>
<dbReference type="UCSC" id="uc003cis.2">
    <molecule id="Q9UI33-1"/>
    <property type="organism name" value="human"/>
</dbReference>
<dbReference type="AGR" id="HGNC:10583"/>
<dbReference type="CTD" id="11280"/>
<dbReference type="DisGeNET" id="11280"/>
<dbReference type="GeneCards" id="SCN11A"/>
<dbReference type="GeneReviews" id="SCN11A"/>
<dbReference type="HGNC" id="HGNC:10583">
    <property type="gene designation" value="SCN11A"/>
</dbReference>
<dbReference type="HPA" id="ENSG00000168356">
    <property type="expression patterns" value="Tissue enhanced (lymphoid tissue, placenta)"/>
</dbReference>
<dbReference type="MalaCards" id="SCN11A"/>
<dbReference type="MIM" id="604385">
    <property type="type" value="gene"/>
</dbReference>
<dbReference type="MIM" id="615548">
    <property type="type" value="phenotype"/>
</dbReference>
<dbReference type="MIM" id="615552">
    <property type="type" value="phenotype"/>
</dbReference>
<dbReference type="neXtProt" id="NX_Q9UI33"/>
<dbReference type="OpenTargets" id="ENSG00000168356"/>
<dbReference type="Orphanet" id="88642">
    <property type="disease" value="Congenital insensitivity to pain-anosmia-neuropathic arthropathy"/>
</dbReference>
<dbReference type="Orphanet" id="391392">
    <property type="disease" value="Familial episodic pain syndrome with predominantly lower limb involvement"/>
</dbReference>
<dbReference type="Orphanet" id="391397">
    <property type="disease" value="Hereditary sensory and autonomic neuropathy type 7"/>
</dbReference>
<dbReference type="Orphanet" id="306577">
    <property type="disease" value="Hereditary sodium channelopathy-related small fibers neuropathy"/>
</dbReference>
<dbReference type="Orphanet" id="46348">
    <property type="disease" value="Paroxysmal extreme pain disorder"/>
</dbReference>
<dbReference type="Orphanet" id="90026">
    <property type="disease" value="Primary erythromelalgia"/>
</dbReference>
<dbReference type="PharmGKB" id="PA35001"/>
<dbReference type="VEuPathDB" id="HostDB:ENSG00000168356"/>
<dbReference type="eggNOG" id="KOG2301">
    <property type="taxonomic scope" value="Eukaryota"/>
</dbReference>
<dbReference type="GeneTree" id="ENSGT00940000161553"/>
<dbReference type="HOGENOM" id="CLU_000540_5_0_1"/>
<dbReference type="InParanoid" id="Q9UI33"/>
<dbReference type="OMA" id="VEIDMFP"/>
<dbReference type="OrthoDB" id="2984333at2759"/>
<dbReference type="PAN-GO" id="Q9UI33">
    <property type="GO annotations" value="5 GO annotations based on evolutionary models"/>
</dbReference>
<dbReference type="PhylomeDB" id="Q9UI33"/>
<dbReference type="TreeFam" id="TF323985"/>
<dbReference type="PathwayCommons" id="Q9UI33"/>
<dbReference type="Reactome" id="R-HSA-445095">
    <property type="pathway name" value="Interaction between L1 and Ankyrins"/>
</dbReference>
<dbReference type="Reactome" id="R-HSA-5576892">
    <property type="pathway name" value="Phase 0 - rapid depolarisation"/>
</dbReference>
<dbReference type="SignaLink" id="Q9UI33"/>
<dbReference type="SIGNOR" id="Q9UI33"/>
<dbReference type="BioGRID-ORCS" id="11280">
    <property type="hits" value="6 hits in 1154 CRISPR screens"/>
</dbReference>
<dbReference type="ChiTaRS" id="SCN11A">
    <property type="organism name" value="human"/>
</dbReference>
<dbReference type="GeneWiki" id="Nav1.9"/>
<dbReference type="GenomeRNAi" id="11280"/>
<dbReference type="Pharos" id="Q9UI33">
    <property type="development level" value="Tclin"/>
</dbReference>
<dbReference type="PRO" id="PR:Q9UI33"/>
<dbReference type="Proteomes" id="UP000005640">
    <property type="component" value="Chromosome 3"/>
</dbReference>
<dbReference type="RNAct" id="Q9UI33">
    <property type="molecule type" value="protein"/>
</dbReference>
<dbReference type="Bgee" id="ENSG00000168356">
    <property type="expression patterns" value="Expressed in buccal mucosa cell and 108 other cell types or tissues"/>
</dbReference>
<dbReference type="ExpressionAtlas" id="Q9UI33">
    <property type="expression patterns" value="baseline and differential"/>
</dbReference>
<dbReference type="GO" id="GO:0030424">
    <property type="term" value="C:axon"/>
    <property type="evidence" value="ECO:0000250"/>
    <property type="project" value="ARUK-UCL"/>
</dbReference>
<dbReference type="GO" id="GO:0044295">
    <property type="term" value="C:axonal growth cone"/>
    <property type="evidence" value="ECO:0007669"/>
    <property type="project" value="Ensembl"/>
</dbReference>
<dbReference type="GO" id="GO:0044299">
    <property type="term" value="C:C-fiber"/>
    <property type="evidence" value="ECO:0007669"/>
    <property type="project" value="Ensembl"/>
</dbReference>
<dbReference type="GO" id="GO:0070062">
    <property type="term" value="C:extracellular exosome"/>
    <property type="evidence" value="ECO:0007005"/>
    <property type="project" value="UniProtKB"/>
</dbReference>
<dbReference type="GO" id="GO:0043025">
    <property type="term" value="C:neuronal cell body"/>
    <property type="evidence" value="ECO:0007669"/>
    <property type="project" value="Ensembl"/>
</dbReference>
<dbReference type="GO" id="GO:0005886">
    <property type="term" value="C:plasma membrane"/>
    <property type="evidence" value="ECO:0000314"/>
    <property type="project" value="UniProtKB"/>
</dbReference>
<dbReference type="GO" id="GO:0001518">
    <property type="term" value="C:voltage-gated sodium channel complex"/>
    <property type="evidence" value="ECO:0000318"/>
    <property type="project" value="GO_Central"/>
</dbReference>
<dbReference type="GO" id="GO:0005248">
    <property type="term" value="F:voltage-gated sodium channel activity"/>
    <property type="evidence" value="ECO:0000314"/>
    <property type="project" value="UniProtKB"/>
</dbReference>
<dbReference type="GO" id="GO:0099610">
    <property type="term" value="P:action potential initiation"/>
    <property type="evidence" value="ECO:0007669"/>
    <property type="project" value="Ensembl"/>
</dbReference>
<dbReference type="GO" id="GO:0002526">
    <property type="term" value="P:acute inflammatory response"/>
    <property type="evidence" value="ECO:0007669"/>
    <property type="project" value="Ensembl"/>
</dbReference>
<dbReference type="GO" id="GO:0060840">
    <property type="term" value="P:artery development"/>
    <property type="evidence" value="ECO:0007669"/>
    <property type="project" value="Ensembl"/>
</dbReference>
<dbReference type="GO" id="GO:0007409">
    <property type="term" value="P:axonogenesis"/>
    <property type="evidence" value="ECO:0007669"/>
    <property type="project" value="Ensembl"/>
</dbReference>
<dbReference type="GO" id="GO:0061367">
    <property type="term" value="P:behavioral response to acetic acid induced pain"/>
    <property type="evidence" value="ECO:0007669"/>
    <property type="project" value="Ensembl"/>
</dbReference>
<dbReference type="GO" id="GO:0061368">
    <property type="term" value="P:behavioral response to formalin induced pain"/>
    <property type="evidence" value="ECO:0007669"/>
    <property type="project" value="Ensembl"/>
</dbReference>
<dbReference type="GO" id="GO:1990408">
    <property type="term" value="P:calcitonin gene-related peptide receptor signaling pathway"/>
    <property type="evidence" value="ECO:0007669"/>
    <property type="project" value="Ensembl"/>
</dbReference>
<dbReference type="GO" id="GO:0070588">
    <property type="term" value="P:calcium ion transmembrane transport"/>
    <property type="evidence" value="ECO:0007669"/>
    <property type="project" value="Ensembl"/>
</dbReference>
<dbReference type="GO" id="GO:0141156">
    <property type="term" value="P:cAMP/PKA signal transduction"/>
    <property type="evidence" value="ECO:0007669"/>
    <property type="project" value="Ensembl"/>
</dbReference>
<dbReference type="GO" id="GO:0086002">
    <property type="term" value="P:cardiac muscle cell action potential involved in contraction"/>
    <property type="evidence" value="ECO:0000318"/>
    <property type="project" value="GO_Central"/>
</dbReference>
<dbReference type="GO" id="GO:0048870">
    <property type="term" value="P:cell motility"/>
    <property type="evidence" value="ECO:0007669"/>
    <property type="project" value="Ensembl"/>
</dbReference>
<dbReference type="GO" id="GO:0070417">
    <property type="term" value="P:cellular response to cold"/>
    <property type="evidence" value="ECO:0007669"/>
    <property type="project" value="Ensembl"/>
</dbReference>
<dbReference type="GO" id="GO:0002544">
    <property type="term" value="P:chronic inflammatory response"/>
    <property type="evidence" value="ECO:0007669"/>
    <property type="project" value="Ensembl"/>
</dbReference>
<dbReference type="GO" id="GO:0007623">
    <property type="term" value="P:circadian rhythm"/>
    <property type="evidence" value="ECO:0007669"/>
    <property type="project" value="Ensembl"/>
</dbReference>
<dbReference type="GO" id="GO:0050966">
    <property type="term" value="P:detection of mechanical stimulus involved in sensory perception of pain"/>
    <property type="evidence" value="ECO:0007669"/>
    <property type="project" value="Ensembl"/>
</dbReference>
<dbReference type="GO" id="GO:0050965">
    <property type="term" value="P:detection of temperature stimulus involved in sensory perception of pain"/>
    <property type="evidence" value="ECO:0007669"/>
    <property type="project" value="Ensembl"/>
</dbReference>
<dbReference type="GO" id="GO:0043303">
    <property type="term" value="P:mast cell degranulation"/>
    <property type="evidence" value="ECO:0007669"/>
    <property type="project" value="Ensembl"/>
</dbReference>
<dbReference type="GO" id="GO:0086010">
    <property type="term" value="P:membrane depolarization during action potential"/>
    <property type="evidence" value="ECO:0000314"/>
    <property type="project" value="UniProtKB"/>
</dbReference>
<dbReference type="GO" id="GO:0060073">
    <property type="term" value="P:micturition"/>
    <property type="evidence" value="ECO:0007669"/>
    <property type="project" value="Ensembl"/>
</dbReference>
<dbReference type="GO" id="GO:0019228">
    <property type="term" value="P:neuronal action potential"/>
    <property type="evidence" value="ECO:0007669"/>
    <property type="project" value="Ensembl"/>
</dbReference>
<dbReference type="GO" id="GO:0060004">
    <property type="term" value="P:reflex"/>
    <property type="evidence" value="ECO:0007669"/>
    <property type="project" value="Ensembl"/>
</dbReference>
<dbReference type="GO" id="GO:0010996">
    <property type="term" value="P:response to auditory stimulus"/>
    <property type="evidence" value="ECO:0007669"/>
    <property type="project" value="Ensembl"/>
</dbReference>
<dbReference type="GO" id="GO:0009408">
    <property type="term" value="P:response to heat"/>
    <property type="evidence" value="ECO:0007669"/>
    <property type="project" value="Ensembl"/>
</dbReference>
<dbReference type="GO" id="GO:0009644">
    <property type="term" value="P:response to high light intensity"/>
    <property type="evidence" value="ECO:0007669"/>
    <property type="project" value="Ensembl"/>
</dbReference>
<dbReference type="GO" id="GO:0071731">
    <property type="term" value="P:response to nitric oxide"/>
    <property type="evidence" value="ECO:0007669"/>
    <property type="project" value="Ensembl"/>
</dbReference>
<dbReference type="GO" id="GO:0034695">
    <property type="term" value="P:response to prostaglandin E"/>
    <property type="evidence" value="ECO:0007669"/>
    <property type="project" value="Ensembl"/>
</dbReference>
<dbReference type="GO" id="GO:0009636">
    <property type="term" value="P:response to toxic substance"/>
    <property type="evidence" value="ECO:0007669"/>
    <property type="project" value="Ensembl"/>
</dbReference>
<dbReference type="GO" id="GO:0009410">
    <property type="term" value="P:response to xenobiotic stimulus"/>
    <property type="evidence" value="ECO:0007669"/>
    <property type="project" value="Ensembl"/>
</dbReference>
<dbReference type="GO" id="GO:0160025">
    <property type="term" value="P:sensory perception of itch"/>
    <property type="evidence" value="ECO:0007669"/>
    <property type="project" value="Ensembl"/>
</dbReference>
<dbReference type="GO" id="GO:0019233">
    <property type="term" value="P:sensory perception of pain"/>
    <property type="evidence" value="ECO:0000315"/>
    <property type="project" value="UniProtKB"/>
</dbReference>
<dbReference type="GO" id="GO:0060538">
    <property type="term" value="P:skeletal muscle organ development"/>
    <property type="evidence" value="ECO:0007669"/>
    <property type="project" value="Ensembl"/>
</dbReference>
<dbReference type="GO" id="GO:1990770">
    <property type="term" value="P:small intestine smooth muscle contraction"/>
    <property type="evidence" value="ECO:0007669"/>
    <property type="project" value="Ensembl"/>
</dbReference>
<dbReference type="GO" id="GO:0035725">
    <property type="term" value="P:sodium ion transmembrane transport"/>
    <property type="evidence" value="ECO:0000318"/>
    <property type="project" value="GO_Central"/>
</dbReference>
<dbReference type="GO" id="GO:0040040">
    <property type="term" value="P:thermosensory behavior"/>
    <property type="evidence" value="ECO:0007669"/>
    <property type="project" value="Ensembl"/>
</dbReference>
<dbReference type="GO" id="GO:0001966">
    <property type="term" value="P:thigmotaxis"/>
    <property type="evidence" value="ECO:0007669"/>
    <property type="project" value="Ensembl"/>
</dbReference>
<dbReference type="CDD" id="cd13433">
    <property type="entry name" value="Na_channel_gate"/>
    <property type="match status" value="1"/>
</dbReference>
<dbReference type="FunFam" id="1.10.238.10:FF:000002">
    <property type="entry name" value="Sodium channel protein"/>
    <property type="match status" value="1"/>
</dbReference>
<dbReference type="FunFam" id="1.10.287.70:FF:000001">
    <property type="entry name" value="Sodium channel protein"/>
    <property type="match status" value="1"/>
</dbReference>
<dbReference type="FunFam" id="1.10.287.70:FF:000116">
    <property type="entry name" value="Sodium channel protein"/>
    <property type="match status" value="1"/>
</dbReference>
<dbReference type="FunFam" id="1.20.120.350:FF:000002">
    <property type="entry name" value="Sodium channel protein"/>
    <property type="match status" value="1"/>
</dbReference>
<dbReference type="FunFam" id="1.20.120.350:FF:000065">
    <property type="entry name" value="Sodium channel protein"/>
    <property type="match status" value="1"/>
</dbReference>
<dbReference type="FunFam" id="1.20.120.350:FF:000066">
    <property type="entry name" value="Sodium channel protein"/>
    <property type="match status" value="1"/>
</dbReference>
<dbReference type="FunFam" id="1.20.120.350:FF:000075">
    <property type="entry name" value="Sodium channel protein"/>
    <property type="match status" value="1"/>
</dbReference>
<dbReference type="FunFam" id="1.20.5.1190:FF:000008">
    <property type="entry name" value="Sodium channel protein"/>
    <property type="match status" value="1"/>
</dbReference>
<dbReference type="Gene3D" id="1.10.287.70">
    <property type="match status" value="4"/>
</dbReference>
<dbReference type="Gene3D" id="1.10.238.10">
    <property type="entry name" value="EF-hand"/>
    <property type="match status" value="1"/>
</dbReference>
<dbReference type="Gene3D" id="1.20.5.1190">
    <property type="entry name" value="iswi atpase"/>
    <property type="match status" value="1"/>
</dbReference>
<dbReference type="Gene3D" id="1.20.120.350">
    <property type="entry name" value="Voltage-gated potassium channels. Chain C"/>
    <property type="match status" value="4"/>
</dbReference>
<dbReference type="InterPro" id="IPR005821">
    <property type="entry name" value="Ion_trans_dom"/>
</dbReference>
<dbReference type="InterPro" id="IPR001696">
    <property type="entry name" value="Na_channel_asu"/>
</dbReference>
<dbReference type="InterPro" id="IPR044564">
    <property type="entry name" value="Na_chnl_inactivation_gate"/>
</dbReference>
<dbReference type="InterPro" id="IPR010526">
    <property type="entry name" value="Na_trans_assoc_dom"/>
</dbReference>
<dbReference type="InterPro" id="IPR043203">
    <property type="entry name" value="VGCC_Ca_Na"/>
</dbReference>
<dbReference type="InterPro" id="IPR027359">
    <property type="entry name" value="Volt_channel_dom_sf"/>
</dbReference>
<dbReference type="PANTHER" id="PTHR10037:SF210">
    <property type="entry name" value="SODIUM CHANNEL PROTEIN TYPE 11 SUBUNIT ALPHA"/>
    <property type="match status" value="1"/>
</dbReference>
<dbReference type="PANTHER" id="PTHR10037">
    <property type="entry name" value="VOLTAGE-GATED CATION CHANNEL CALCIUM AND SODIUM"/>
    <property type="match status" value="1"/>
</dbReference>
<dbReference type="Pfam" id="PF00520">
    <property type="entry name" value="Ion_trans"/>
    <property type="match status" value="4"/>
</dbReference>
<dbReference type="Pfam" id="PF24609">
    <property type="entry name" value="IQ_SCN5A_C"/>
    <property type="match status" value="1"/>
</dbReference>
<dbReference type="Pfam" id="PF06512">
    <property type="entry name" value="Na_trans_assoc"/>
    <property type="match status" value="1"/>
</dbReference>
<dbReference type="PRINTS" id="PR00170">
    <property type="entry name" value="NACHANNEL"/>
</dbReference>
<dbReference type="SUPFAM" id="SSF81324">
    <property type="entry name" value="Voltage-gated potassium channels"/>
    <property type="match status" value="4"/>
</dbReference>
<sequence length="1791" mass="204922">MDDRCYPVIFPDERNFRPFTSDSLAAIEKRIAIQKEKKKSKDQTGEVPQPRPQLDLKASRKLPKLYGDIPRELIGKPLEDLDPFYRNHKTFMVLNRKRTIYRFSAKHALFIFGPFNSIRSLAIRVSVHSLFSMFIIGTVIINCVFMATGPAKNSNSNNTDIAECVFTGIYIFEALIKILARGFILDEFSFLRDPWNWLDSIVIGIAIVSYIPGITIKLLPLRTFRVFRALKAISVVSRLKVIVGALLRSVKKLVNVIILTFFCLSIFALVGQQLFMGSLNLKCISRDCKNISNPEAYDHCFEKKENSPEFKMCGIWMGNSACSIQYECKHTKINPDYNYTNFDNFGWSFLAMFRLMTQDSWEKLYQQTLRTTGLYSVFFFIVVIFLGSFYLINLTLAVVTMAYEEQNKNVAAEIEAKEKMFQEAQQLLKEEKEALVAMGIDRSSLTSLETSYFTPKKRKLFGNKKRKSFFLRESGKDQPPGSDSDEDCQKKPQLLEQTKRLSQNLSLDHFDEHGDPLQRQRALSAVSILTITMKEQEKSQEPCLPCGENLASKYLVWNCCPQWLCVKKVLRTVMTDPFTELAITICIIINTVFLAMEHHKMEASFEKMLNIGNLVFTSIFIAEMCLKIIALDPYHYFRRGWNIFDSIVALLSFADVMNCVLQKRSWPFLRSFRVLRVFKLAKSWPTLNTLIKIIGNSVGALGSLTVVLVIVIFIFSVVGMQLFGRSFNSQKSPKLCNPTGPTVSCLRHWHMGDFWHSFLVVFRILCGEWIENMWECMQEANASSSLCVIVFILITVIGKLVVLNLFIALLLNSFSNEERNGNLEGEARKTKVQLALDRFRRAFCFVRHTLEHFCHKWCRKQNLPQQKEVAGGCAAQSKDIIPLVMEMKRGSETQEELGILTSVPKTLGVRHDWTWLAPLAEEEDDVEFSGEDNAQRITQPEPEQQAYELHQENKKPTSQRVQSVEIDMFSEDEPHLTIQDPRKKSDVTSILSECSTIDLQDGFGWLPEMVPKKQPERCLPKGFGCCFPCCSVDKRKPPWVIWWNLRKTCYQIVKHSWFESFIIFVILLSSGALIFEDVHLENQPKIQELLNCTDIIFTHIFILEMVLKWVAFGFGKYFTSAWCCLDFIIVIVSVTTLINLMELKSFRTLRALRPLRALSQFEGMKVVVNALIGAIPAILNVLLVCLIFWLVFCILGVYFFSGKFGKCINGTDSVINYTIITNKSQCESGNFSWINQKVNFDNVGNAYLALLQVATFKGWMDIIYAAVDSTEKEQQPEFESNSLGYIYFVVFIIFGSFFTLNLFIGVIIDNFNQQQKKLGGQDIFMTEEQKKYYNAMKKLGSKKPQKPIPRPLNKCQGLVFDIVTSQIFDIIIISLIILNMISMMAESYNQPKAMKSILDHLNWVFVVIFTLECLIKIFALRQYYFTNGWNLFDCVVVLLSIVSTMISTLENQEHIPFPPTLFRIVRLARIGRILRLVRAARGIRTLLFALMMSLPSLFNIGLLLFLIMFIYAILGMNWFSKVNPESGIDDIFNFKTFASSMLCLFQISTSAGWDSLLSPMLRSKESCNSSSENCHLPGIATSYFVSYIIISFLIVVNMYIAVILENFNTATEESEDPLGEDDFDIFYEVWEKFDPEATQFIKYSALSDFADALPEPLRVAKPNKYQFLVMDLPMVSEDRLHCMDILFAFTARVLGGSDGLDSMKAMMEEKFMEANPLKKLYEPIVTTTKRKEEERGAAIIQKAFRKYMMKVTKGDQGDQNDLENGPHSPLQTLCNGDLSSFGVAKGKVHCD</sequence>
<accession>Q9UI33</accession>
<accession>A6NN05</accession>
<accession>C9JD48</accession>
<accession>C9JR31</accession>
<accession>Q68K15</accession>
<accession>Q8NDX3</accession>
<accession>Q9UHE0</accession>
<accession>Q9UHM0</accession>